<organism>
    <name type="scientific">Nostoc punctiforme (strain ATCC 29133 / PCC 73102)</name>
    <dbReference type="NCBI Taxonomy" id="63737"/>
    <lineage>
        <taxon>Bacteria</taxon>
        <taxon>Bacillati</taxon>
        <taxon>Cyanobacteriota</taxon>
        <taxon>Cyanophyceae</taxon>
        <taxon>Nostocales</taxon>
        <taxon>Nostocaceae</taxon>
        <taxon>Nostoc</taxon>
    </lineage>
</organism>
<feature type="chain" id="PRO_1000116765" description="Elongation factor Ts">
    <location>
        <begin position="1"/>
        <end position="314"/>
    </location>
</feature>
<feature type="region of interest" description="Involved in Mg(2+) ion dislocation from EF-Tu" evidence="1">
    <location>
        <begin position="82"/>
        <end position="85"/>
    </location>
</feature>
<name>EFTS_NOSP7</name>
<protein>
    <recommendedName>
        <fullName evidence="1">Elongation factor Ts</fullName>
        <shortName evidence="1">EF-Ts</shortName>
    </recommendedName>
</protein>
<evidence type="ECO:0000255" key="1">
    <source>
        <dbReference type="HAMAP-Rule" id="MF_00050"/>
    </source>
</evidence>
<comment type="function">
    <text evidence="1">Associates with the EF-Tu.GDP complex and induces the exchange of GDP to GTP. It remains bound to the aminoacyl-tRNA.EF-Tu.GTP complex up to the GTP hydrolysis stage on the ribosome.</text>
</comment>
<comment type="subcellular location">
    <subcellularLocation>
        <location evidence="1">Cytoplasm</location>
    </subcellularLocation>
</comment>
<comment type="similarity">
    <text evidence="1">Belongs to the EF-Ts family.</text>
</comment>
<dbReference type="EMBL" id="CP001037">
    <property type="protein sequence ID" value="ACC83874.1"/>
    <property type="molecule type" value="Genomic_DNA"/>
</dbReference>
<dbReference type="RefSeq" id="WP_012411818.1">
    <property type="nucleotide sequence ID" value="NC_010628.1"/>
</dbReference>
<dbReference type="SMR" id="B2J6U8"/>
<dbReference type="STRING" id="63737.Npun_R5569"/>
<dbReference type="EnsemblBacteria" id="ACC83874">
    <property type="protein sequence ID" value="ACC83874"/>
    <property type="gene ID" value="Npun_R5569"/>
</dbReference>
<dbReference type="KEGG" id="npu:Npun_R5569"/>
<dbReference type="eggNOG" id="COG0264">
    <property type="taxonomic scope" value="Bacteria"/>
</dbReference>
<dbReference type="HOGENOM" id="CLU_047155_0_2_3"/>
<dbReference type="OrthoDB" id="9808348at2"/>
<dbReference type="PhylomeDB" id="B2J6U8"/>
<dbReference type="Proteomes" id="UP000001191">
    <property type="component" value="Chromosome"/>
</dbReference>
<dbReference type="GO" id="GO:0005737">
    <property type="term" value="C:cytoplasm"/>
    <property type="evidence" value="ECO:0007669"/>
    <property type="project" value="UniProtKB-SubCell"/>
</dbReference>
<dbReference type="GO" id="GO:0003746">
    <property type="term" value="F:translation elongation factor activity"/>
    <property type="evidence" value="ECO:0007669"/>
    <property type="project" value="UniProtKB-UniRule"/>
</dbReference>
<dbReference type="CDD" id="cd14275">
    <property type="entry name" value="UBA_EF-Ts"/>
    <property type="match status" value="1"/>
</dbReference>
<dbReference type="FunFam" id="1.10.286.20:FF:000001">
    <property type="entry name" value="Elongation factor Ts"/>
    <property type="match status" value="1"/>
</dbReference>
<dbReference type="FunFam" id="1.10.8.10:FF:000001">
    <property type="entry name" value="Elongation factor Ts"/>
    <property type="match status" value="1"/>
</dbReference>
<dbReference type="Gene3D" id="1.10.286.20">
    <property type="match status" value="1"/>
</dbReference>
<dbReference type="Gene3D" id="1.10.8.10">
    <property type="entry name" value="DNA helicase RuvA subunit, C-terminal domain"/>
    <property type="match status" value="1"/>
</dbReference>
<dbReference type="Gene3D" id="3.30.479.20">
    <property type="entry name" value="Elongation factor Ts, dimerisation domain"/>
    <property type="match status" value="2"/>
</dbReference>
<dbReference type="HAMAP" id="MF_00050">
    <property type="entry name" value="EF_Ts"/>
    <property type="match status" value="1"/>
</dbReference>
<dbReference type="InterPro" id="IPR036402">
    <property type="entry name" value="EF-Ts_dimer_sf"/>
</dbReference>
<dbReference type="InterPro" id="IPR001816">
    <property type="entry name" value="Transl_elong_EFTs/EF1B"/>
</dbReference>
<dbReference type="InterPro" id="IPR014039">
    <property type="entry name" value="Transl_elong_EFTs/EF1B_dimer"/>
</dbReference>
<dbReference type="InterPro" id="IPR018101">
    <property type="entry name" value="Transl_elong_Ts_CS"/>
</dbReference>
<dbReference type="InterPro" id="IPR009060">
    <property type="entry name" value="UBA-like_sf"/>
</dbReference>
<dbReference type="NCBIfam" id="TIGR00116">
    <property type="entry name" value="tsf"/>
    <property type="match status" value="1"/>
</dbReference>
<dbReference type="PANTHER" id="PTHR11741">
    <property type="entry name" value="ELONGATION FACTOR TS"/>
    <property type="match status" value="1"/>
</dbReference>
<dbReference type="PANTHER" id="PTHR11741:SF10">
    <property type="entry name" value="POLYPROTEIN OF EF-TS, CHLOROPLASTIC"/>
    <property type="match status" value="1"/>
</dbReference>
<dbReference type="Pfam" id="PF00889">
    <property type="entry name" value="EF_TS"/>
    <property type="match status" value="1"/>
</dbReference>
<dbReference type="SUPFAM" id="SSF54713">
    <property type="entry name" value="Elongation factor Ts (EF-Ts), dimerisation domain"/>
    <property type="match status" value="2"/>
</dbReference>
<dbReference type="SUPFAM" id="SSF46934">
    <property type="entry name" value="UBA-like"/>
    <property type="match status" value="1"/>
</dbReference>
<dbReference type="PROSITE" id="PS01126">
    <property type="entry name" value="EF_TS_1"/>
    <property type="match status" value="1"/>
</dbReference>
<dbReference type="PROSITE" id="PS01127">
    <property type="entry name" value="EF_TS_2"/>
    <property type="match status" value="1"/>
</dbReference>
<proteinExistence type="inferred from homology"/>
<reference key="1">
    <citation type="journal article" date="2013" name="Plant Physiol.">
        <title>A Nostoc punctiforme Sugar Transporter Necessary to Establish a Cyanobacterium-Plant Symbiosis.</title>
        <authorList>
            <person name="Ekman M."/>
            <person name="Picossi S."/>
            <person name="Campbell E.L."/>
            <person name="Meeks J.C."/>
            <person name="Flores E."/>
        </authorList>
    </citation>
    <scope>NUCLEOTIDE SEQUENCE [LARGE SCALE GENOMIC DNA]</scope>
    <source>
        <strain>ATCC 29133 / PCC 73102</strain>
    </source>
</reference>
<sequence>MAEISAKLVQELRQKTGAGMMDCKKALIETEGNVEEAADWLRKKGISKAGAKSDRVAAEGLVDTYIQPGGQVGVLIEVNCQTDFVARNEAFKALVKNLAKQAAAADSVESLLAQQYADSPGGTVEEFIKQTIATLGENIQVRRFVNFALAEGTQGVVDSYIHTGGRVGVLVELGSQSESVATNQEFQSLARNTAMQVAACPNVEYVSVDQIPAEVAQKEKDIEMGKDDLANKPENIKEKIVQGRIEKRLKELTLIDQPYIRDQSISVEDLFKQAKTKLGEEIQVTRFVRYILGEGIEKQEISFADEVAAQMGGK</sequence>
<accession>B2J6U8</accession>
<keyword id="KW-0963">Cytoplasm</keyword>
<keyword id="KW-0251">Elongation factor</keyword>
<keyword id="KW-0648">Protein biosynthesis</keyword>
<keyword id="KW-1185">Reference proteome</keyword>
<gene>
    <name evidence="1" type="primary">tsf</name>
    <name type="ordered locus">Npun_R5569</name>
</gene>